<organism>
    <name type="scientific">Neisseria meningitidis serogroup C (strain 053442)</name>
    <dbReference type="NCBI Taxonomy" id="374833"/>
    <lineage>
        <taxon>Bacteria</taxon>
        <taxon>Pseudomonadati</taxon>
        <taxon>Pseudomonadota</taxon>
        <taxon>Betaproteobacteria</taxon>
        <taxon>Neisseriales</taxon>
        <taxon>Neisseriaceae</taxon>
        <taxon>Neisseria</taxon>
    </lineage>
</organism>
<keyword id="KW-0687">Ribonucleoprotein</keyword>
<keyword id="KW-0689">Ribosomal protein</keyword>
<dbReference type="EMBL" id="CP000381">
    <property type="protein sequence ID" value="ABX74137.1"/>
    <property type="molecule type" value="Genomic_DNA"/>
</dbReference>
<dbReference type="RefSeq" id="WP_002215374.1">
    <property type="nucleotide sequence ID" value="NC_010120.1"/>
</dbReference>
<dbReference type="SMR" id="A9M3X5"/>
<dbReference type="GeneID" id="93387206"/>
<dbReference type="KEGG" id="nmn:NMCC_2014"/>
<dbReference type="HOGENOM" id="CLU_086499_3_2_4"/>
<dbReference type="Proteomes" id="UP000001177">
    <property type="component" value="Chromosome"/>
</dbReference>
<dbReference type="GO" id="GO:0022625">
    <property type="term" value="C:cytosolic large ribosomal subunit"/>
    <property type="evidence" value="ECO:0007669"/>
    <property type="project" value="TreeGrafter"/>
</dbReference>
<dbReference type="GO" id="GO:0003729">
    <property type="term" value="F:mRNA binding"/>
    <property type="evidence" value="ECO:0007669"/>
    <property type="project" value="TreeGrafter"/>
</dbReference>
<dbReference type="GO" id="GO:0003735">
    <property type="term" value="F:structural constituent of ribosome"/>
    <property type="evidence" value="ECO:0007669"/>
    <property type="project" value="InterPro"/>
</dbReference>
<dbReference type="GO" id="GO:0006412">
    <property type="term" value="P:translation"/>
    <property type="evidence" value="ECO:0007669"/>
    <property type="project" value="UniProtKB-UniRule"/>
</dbReference>
<dbReference type="CDD" id="cd00387">
    <property type="entry name" value="Ribosomal_L7_L12"/>
    <property type="match status" value="1"/>
</dbReference>
<dbReference type="FunFam" id="1.20.5.710:FF:000003">
    <property type="entry name" value="50S ribosomal protein L7/L12"/>
    <property type="match status" value="1"/>
</dbReference>
<dbReference type="FunFam" id="3.30.1390.10:FF:000001">
    <property type="entry name" value="50S ribosomal protein L7/L12"/>
    <property type="match status" value="1"/>
</dbReference>
<dbReference type="Gene3D" id="3.30.1390.10">
    <property type="match status" value="1"/>
</dbReference>
<dbReference type="Gene3D" id="1.20.5.710">
    <property type="entry name" value="Single helix bin"/>
    <property type="match status" value="1"/>
</dbReference>
<dbReference type="HAMAP" id="MF_00368">
    <property type="entry name" value="Ribosomal_bL12"/>
    <property type="match status" value="1"/>
</dbReference>
<dbReference type="InterPro" id="IPR000206">
    <property type="entry name" value="Ribosomal_bL12"/>
</dbReference>
<dbReference type="InterPro" id="IPR013823">
    <property type="entry name" value="Ribosomal_bL12_C"/>
</dbReference>
<dbReference type="InterPro" id="IPR014719">
    <property type="entry name" value="Ribosomal_bL12_C/ClpS-like"/>
</dbReference>
<dbReference type="InterPro" id="IPR008932">
    <property type="entry name" value="Ribosomal_bL12_oligo"/>
</dbReference>
<dbReference type="InterPro" id="IPR036235">
    <property type="entry name" value="Ribosomal_bL12_oligo_N_sf"/>
</dbReference>
<dbReference type="NCBIfam" id="TIGR00855">
    <property type="entry name" value="L12"/>
    <property type="match status" value="1"/>
</dbReference>
<dbReference type="PANTHER" id="PTHR45987">
    <property type="entry name" value="39S RIBOSOMAL PROTEIN L12"/>
    <property type="match status" value="1"/>
</dbReference>
<dbReference type="PANTHER" id="PTHR45987:SF4">
    <property type="entry name" value="LARGE RIBOSOMAL SUBUNIT PROTEIN BL12M"/>
    <property type="match status" value="1"/>
</dbReference>
<dbReference type="Pfam" id="PF00542">
    <property type="entry name" value="Ribosomal_L12"/>
    <property type="match status" value="1"/>
</dbReference>
<dbReference type="Pfam" id="PF16320">
    <property type="entry name" value="Ribosomal_L12_N"/>
    <property type="match status" value="1"/>
</dbReference>
<dbReference type="SUPFAM" id="SSF54736">
    <property type="entry name" value="ClpS-like"/>
    <property type="match status" value="1"/>
</dbReference>
<dbReference type="SUPFAM" id="SSF48300">
    <property type="entry name" value="Ribosomal protein L7/12, oligomerisation (N-terminal) domain"/>
    <property type="match status" value="1"/>
</dbReference>
<sequence length="123" mass="12622">MAITKEDILEAVGSLTVMELNDLVKAFEEKFGVSAAAVAVAGPAGAGAADAEEKTEFDVVLASAGDQKVGVIKVVRAITGLGLKEAKDIVDGAPKTIKEGVSKAEAEDIQKQLEEAGAKVEIK</sequence>
<comment type="function">
    <text evidence="1">Forms part of the ribosomal stalk which helps the ribosome interact with GTP-bound translation factors. Is thus essential for accurate translation.</text>
</comment>
<comment type="subunit">
    <text evidence="1">Homodimer. Part of the ribosomal stalk of the 50S ribosomal subunit. Forms a multimeric L10(L12)X complex, where L10 forms an elongated spine to which 2 to 4 L12 dimers bind in a sequential fashion. Binds GTP-bound translation factors.</text>
</comment>
<comment type="similarity">
    <text evidence="1">Belongs to the bacterial ribosomal protein bL12 family.</text>
</comment>
<proteinExistence type="inferred from homology"/>
<reference key="1">
    <citation type="journal article" date="2008" name="Genomics">
        <title>Characterization of ST-4821 complex, a unique Neisseria meningitidis clone.</title>
        <authorList>
            <person name="Peng J."/>
            <person name="Yang L."/>
            <person name="Yang F."/>
            <person name="Yang J."/>
            <person name="Yan Y."/>
            <person name="Nie H."/>
            <person name="Zhang X."/>
            <person name="Xiong Z."/>
            <person name="Jiang Y."/>
            <person name="Cheng F."/>
            <person name="Xu X."/>
            <person name="Chen S."/>
            <person name="Sun L."/>
            <person name="Li W."/>
            <person name="Shen Y."/>
            <person name="Shao Z."/>
            <person name="Liang X."/>
            <person name="Xu J."/>
            <person name="Jin Q."/>
        </authorList>
    </citation>
    <scope>NUCLEOTIDE SEQUENCE [LARGE SCALE GENOMIC DNA]</scope>
    <source>
        <strain>053442</strain>
    </source>
</reference>
<name>RL7_NEIM0</name>
<gene>
    <name evidence="1" type="primary">rplL</name>
    <name type="ordered locus">NMCC_2014</name>
</gene>
<accession>A9M3X5</accession>
<protein>
    <recommendedName>
        <fullName evidence="1">Large ribosomal subunit protein bL12</fullName>
    </recommendedName>
    <alternativeName>
        <fullName evidence="2">50S ribosomal protein L7/L12</fullName>
    </alternativeName>
</protein>
<feature type="chain" id="PRO_1000079802" description="Large ribosomal subunit protein bL12">
    <location>
        <begin position="1"/>
        <end position="123"/>
    </location>
</feature>
<evidence type="ECO:0000255" key="1">
    <source>
        <dbReference type="HAMAP-Rule" id="MF_00368"/>
    </source>
</evidence>
<evidence type="ECO:0000305" key="2"/>